<comment type="function">
    <text evidence="3 4">Toxic component of a type I toxin-antitoxin (TA) system; overexpression in the absence of cognate antisense antitoxin SR5 RNA leads to cell lysis (PubMed:26565032, PubMed:26940229). Base pairing occurs between the 3' UTRs of bsrE mRNA and SR5 RNA which leads to bsrE mRNA degradation initiated by RNase III (rnc) and RNase J1 (rnjA) (PubMed:26940229). Genetic evidence suggests an unidentified RNA-binding protein may exist that promotes TA RNA interaction (PubMed:26565032).</text>
</comment>
<comment type="subcellular location">
    <subcellularLocation>
        <location evidence="7">Cell membrane</location>
        <topology evidence="1">Single-pass membrane protein</topology>
    </subcellularLocation>
</comment>
<comment type="induction">
    <text evidence="2 4">Accumulates by 2 hours post-innoculation with maximal expression at 4 hours, and has disappeared by 8 hours in rich media (PubMed:18948176). Slightly different results were found in another study; in rich medium, expression increased slowly over time and was maximal at 6 hours. In minimal medium without glucose expression decreased as growth progressed, while in minimal medium plus glucose expression was constant during growth. SR5 antitoxin RNA is always present at levels equal to or in excess of toxin mRNA. Responds to a number of different stresses; ethanol, methanol and isopropanol and pH 9.1 stress cause a rapid loss of bsrE and SR5 mRNA, Fe(2+) limitation and pH 5.3 stress increases the SR5 RNA while oxygen depletion decreases SR5 with no effect on bsrE mRNA. Heat shock at 48 degrees Celsius causes a gradual decrease in bsrG mRNA (PubMed:26940229).</text>
</comment>
<comment type="disruption phenotype">
    <text evidence="4">Non-essential, it can be deleted on rich medium; the gene for the antisense antitoxin SR5 RNA can also be deleted without a visible phenotype.</text>
</comment>
<comment type="miscellaneous">
    <text evidence="7">Encoded in the prophage-like P6 region.</text>
</comment>
<proteinExistence type="evidence at protein level"/>
<gene>
    <name evidence="5" type="primary">bsrE</name>
    <name type="ORF">BSU_18978</name>
</gene>
<keyword id="KW-1003">Cell membrane</keyword>
<keyword id="KW-0472">Membrane</keyword>
<keyword id="KW-1185">Reference proteome</keyword>
<keyword id="KW-1277">Toxin-antitoxin system</keyword>
<keyword id="KW-0812">Transmembrane</keyword>
<keyword id="KW-1133">Transmembrane helix</keyword>
<feature type="chain" id="PRO_0000450219" description="Small toxic protein BsrE">
    <location>
        <begin position="1"/>
        <end position="30"/>
    </location>
</feature>
<feature type="transmembrane region" description="Helical" evidence="1">
    <location>
        <begin position="4"/>
        <end position="24"/>
    </location>
</feature>
<accession>A0A2K4Z9J5</accession>
<protein>
    <recommendedName>
        <fullName evidence="6">Small toxic protein BsrE</fullName>
    </recommendedName>
</protein>
<organism>
    <name type="scientific">Bacillus subtilis (strain 168)</name>
    <dbReference type="NCBI Taxonomy" id="224308"/>
    <lineage>
        <taxon>Bacteria</taxon>
        <taxon>Bacillati</taxon>
        <taxon>Bacillota</taxon>
        <taxon>Bacilli</taxon>
        <taxon>Bacillales</taxon>
        <taxon>Bacillaceae</taxon>
        <taxon>Bacillus</taxon>
    </lineage>
</organism>
<name>BSRE_BACSU</name>
<sequence length="30" mass="3358">MSTFQALMLMLAIGSFIIALLTYIEKIDLP</sequence>
<reference key="1">
    <citation type="journal article" date="1997" name="Nature">
        <title>The complete genome sequence of the Gram-positive bacterium Bacillus subtilis.</title>
        <authorList>
            <person name="Kunst F."/>
            <person name="Ogasawara N."/>
            <person name="Moszer I."/>
            <person name="Albertini A.M."/>
            <person name="Alloni G."/>
            <person name="Azevedo V."/>
            <person name="Bertero M.G."/>
            <person name="Bessieres P."/>
            <person name="Bolotin A."/>
            <person name="Borchert S."/>
            <person name="Borriss R."/>
            <person name="Boursier L."/>
            <person name="Brans A."/>
            <person name="Braun M."/>
            <person name="Brignell S.C."/>
            <person name="Bron S."/>
            <person name="Brouillet S."/>
            <person name="Bruschi C.V."/>
            <person name="Caldwell B."/>
            <person name="Capuano V."/>
            <person name="Carter N.M."/>
            <person name="Choi S.-K."/>
            <person name="Codani J.-J."/>
            <person name="Connerton I.F."/>
            <person name="Cummings N.J."/>
            <person name="Daniel R.A."/>
            <person name="Denizot F."/>
            <person name="Devine K.M."/>
            <person name="Duesterhoeft A."/>
            <person name="Ehrlich S.D."/>
            <person name="Emmerson P.T."/>
            <person name="Entian K.-D."/>
            <person name="Errington J."/>
            <person name="Fabret C."/>
            <person name="Ferrari E."/>
            <person name="Foulger D."/>
            <person name="Fritz C."/>
            <person name="Fujita M."/>
            <person name="Fujita Y."/>
            <person name="Fuma S."/>
            <person name="Galizzi A."/>
            <person name="Galleron N."/>
            <person name="Ghim S.-Y."/>
            <person name="Glaser P."/>
            <person name="Goffeau A."/>
            <person name="Golightly E.J."/>
            <person name="Grandi G."/>
            <person name="Guiseppi G."/>
            <person name="Guy B.J."/>
            <person name="Haga K."/>
            <person name="Haiech J."/>
            <person name="Harwood C.R."/>
            <person name="Henaut A."/>
            <person name="Hilbert H."/>
            <person name="Holsappel S."/>
            <person name="Hosono S."/>
            <person name="Hullo M.-F."/>
            <person name="Itaya M."/>
            <person name="Jones L.-M."/>
            <person name="Joris B."/>
            <person name="Karamata D."/>
            <person name="Kasahara Y."/>
            <person name="Klaerr-Blanchard M."/>
            <person name="Klein C."/>
            <person name="Kobayashi Y."/>
            <person name="Koetter P."/>
            <person name="Koningstein G."/>
            <person name="Krogh S."/>
            <person name="Kumano M."/>
            <person name="Kurita K."/>
            <person name="Lapidus A."/>
            <person name="Lardinois S."/>
            <person name="Lauber J."/>
            <person name="Lazarevic V."/>
            <person name="Lee S.-M."/>
            <person name="Levine A."/>
            <person name="Liu H."/>
            <person name="Masuda S."/>
            <person name="Mauel C."/>
            <person name="Medigue C."/>
            <person name="Medina N."/>
            <person name="Mellado R.P."/>
            <person name="Mizuno M."/>
            <person name="Moestl D."/>
            <person name="Nakai S."/>
            <person name="Noback M."/>
            <person name="Noone D."/>
            <person name="O'Reilly M."/>
            <person name="Ogawa K."/>
            <person name="Ogiwara A."/>
            <person name="Oudega B."/>
            <person name="Park S.-H."/>
            <person name="Parro V."/>
            <person name="Pohl T.M."/>
            <person name="Portetelle D."/>
            <person name="Porwollik S."/>
            <person name="Prescott A.M."/>
            <person name="Presecan E."/>
            <person name="Pujic P."/>
            <person name="Purnelle B."/>
            <person name="Rapoport G."/>
            <person name="Rey M."/>
            <person name="Reynolds S."/>
            <person name="Rieger M."/>
            <person name="Rivolta C."/>
            <person name="Rocha E."/>
            <person name="Roche B."/>
            <person name="Rose M."/>
            <person name="Sadaie Y."/>
            <person name="Sato T."/>
            <person name="Scanlan E."/>
            <person name="Schleich S."/>
            <person name="Schroeter R."/>
            <person name="Scoffone F."/>
            <person name="Sekiguchi J."/>
            <person name="Sekowska A."/>
            <person name="Seror S.J."/>
            <person name="Serror P."/>
            <person name="Shin B.-S."/>
            <person name="Soldo B."/>
            <person name="Sorokin A."/>
            <person name="Tacconi E."/>
            <person name="Takagi T."/>
            <person name="Takahashi H."/>
            <person name="Takemaru K."/>
            <person name="Takeuchi M."/>
            <person name="Tamakoshi A."/>
            <person name="Tanaka T."/>
            <person name="Terpstra P."/>
            <person name="Tognoni A."/>
            <person name="Tosato V."/>
            <person name="Uchiyama S."/>
            <person name="Vandenbol M."/>
            <person name="Vannier F."/>
            <person name="Vassarotti A."/>
            <person name="Viari A."/>
            <person name="Wambutt R."/>
            <person name="Wedler E."/>
            <person name="Wedler H."/>
            <person name="Weitzenegger T."/>
            <person name="Winters P."/>
            <person name="Wipat A."/>
            <person name="Yamamoto H."/>
            <person name="Yamane K."/>
            <person name="Yasumoto K."/>
            <person name="Yata K."/>
            <person name="Yoshida K."/>
            <person name="Yoshikawa H.-F."/>
            <person name="Zumstein E."/>
            <person name="Yoshikawa H."/>
            <person name="Danchin A."/>
        </authorList>
    </citation>
    <scope>NUCLEOTIDE SEQUENCE [LARGE SCALE GENOMIC DNA]</scope>
    <source>
        <strain>168</strain>
    </source>
</reference>
<reference key="2">
    <citation type="journal article" date="2009" name="Gene">
        <title>Novel small RNA-encoding genes in the intergenic regions of Bacillus subtilis.</title>
        <authorList>
            <person name="Saito S."/>
            <person name="Kakeshita H."/>
            <person name="Nakamura K."/>
        </authorList>
    </citation>
    <scope>IDENTIFICATION</scope>
    <scope>INDUCTION</scope>
    <source>
        <strain>168</strain>
    </source>
</reference>
<reference key="3">
    <citation type="journal article" date="2010" name="Nucleic Acids Res.">
        <title>Identification of regulatory RNAs in Bacillus subtilis.</title>
        <authorList>
            <person name="Irnov I."/>
            <person name="Sharma C.M."/>
            <person name="Vogel J."/>
            <person name="Winkler W.C."/>
        </authorList>
    </citation>
    <scope>IDENTIFICATION</scope>
    <scope>DISCUSSION OF FUNCTION</scope>
    <source>
        <strain>168</strain>
    </source>
</reference>
<reference key="4">
    <citation type="journal article" date="2016" name="J. Biol. Chem.">
        <title>In Vitro Characterization of the Type I Toxin-Antitoxin System bsrE/SR5 from Bacillus subtilis.</title>
        <authorList>
            <person name="Meissner C."/>
            <person name="Jahn N."/>
            <person name="Brantl S."/>
        </authorList>
    </citation>
    <scope>FUNCTION AS A TOXIN</scope>
    <source>
        <strain>168 / DB104</strain>
    </source>
</reference>
<reference key="5">
    <citation type="journal article" date="2016" name="RNA Biol.">
        <title>A multistress responsive type I toxin-antitoxin system: bsrE/SR5 from the B. subtilis chromosome.</title>
        <authorList>
            <person name="Mueller P."/>
            <person name="Jahn N."/>
            <person name="Ring C."/>
            <person name="Maiwald C."/>
            <person name="Neubert R."/>
            <person name="Meissner C."/>
            <person name="Brantl S."/>
        </authorList>
    </citation>
    <scope>FUNCTION</scope>
    <scope>INDUCTION</scope>
    <scope>DISRUPTION PHENOTYPE</scope>
    <source>
        <strain>168 / DB104</strain>
    </source>
</reference>
<evidence type="ECO:0000255" key="1"/>
<evidence type="ECO:0000269" key="2">
    <source>
    </source>
</evidence>
<evidence type="ECO:0000269" key="3">
    <source>
    </source>
</evidence>
<evidence type="ECO:0000269" key="4">
    <source>
    </source>
</evidence>
<evidence type="ECO:0000303" key="5">
    <source>
    </source>
</evidence>
<evidence type="ECO:0000303" key="6">
    <source>
    </source>
</evidence>
<evidence type="ECO:0000305" key="7"/>
<dbReference type="EMBL" id="AL009126">
    <property type="protein sequence ID" value="SOX90563.1"/>
    <property type="molecule type" value="Genomic_DNA"/>
</dbReference>
<dbReference type="RefSeq" id="YP_009513965.1">
    <property type="nucleotide sequence ID" value="NC_000964.3"/>
</dbReference>
<dbReference type="EnsemblBacteria" id="SOX90563">
    <property type="protein sequence ID" value="SOX90563"/>
    <property type="gene ID" value="BSU_18978"/>
</dbReference>
<dbReference type="GeneID" id="37862873"/>
<dbReference type="InParanoid" id="A0A2K4Z9J5"/>
<dbReference type="OrthoDB" id="9919047at2"/>
<dbReference type="BioCyc" id="BSUB:MONOMER8J2-55"/>
<dbReference type="Proteomes" id="UP000001570">
    <property type="component" value="Chromosome"/>
</dbReference>
<dbReference type="GO" id="GO:0005886">
    <property type="term" value="C:plasma membrane"/>
    <property type="evidence" value="ECO:0007669"/>
    <property type="project" value="UniProtKB-SubCell"/>
</dbReference>
<dbReference type="InterPro" id="IPR031616">
    <property type="entry name" value="BsrE-like"/>
</dbReference>
<dbReference type="Pfam" id="PF16935">
    <property type="entry name" value="Hol_Tox"/>
    <property type="match status" value="1"/>
</dbReference>